<organism>
    <name type="scientific">Leptospira borgpetersenii serovar Hardjo-bovis (strain L550)</name>
    <dbReference type="NCBI Taxonomy" id="355276"/>
    <lineage>
        <taxon>Bacteria</taxon>
        <taxon>Pseudomonadati</taxon>
        <taxon>Spirochaetota</taxon>
        <taxon>Spirochaetia</taxon>
        <taxon>Leptospirales</taxon>
        <taxon>Leptospiraceae</taxon>
        <taxon>Leptospira</taxon>
    </lineage>
</organism>
<sequence length="206" mass="21916">MAKGLIGKKVGMSQIFDEQGNIIPVTVLEVGPCAVSQVKSVENDGYEAIQLAFQDTKEFQISKAEKNHLAKASLGPKKVLREFRSFGDSPATGSVLKVQDIFAVSDVVKVTGVSKGRGFQGVVKRHGHAGGPGGHGSRFHRHPGSMGANSTPSRVFKGVKLPGRTGSQQTTVRNLKVVRINEEKNLVFVSGAVPGTTNTVITIEKI</sequence>
<accession>Q055E4</accession>
<protein>
    <recommendedName>
        <fullName evidence="1">Large ribosomal subunit protein uL3</fullName>
    </recommendedName>
    <alternativeName>
        <fullName evidence="3">50S ribosomal protein L3</fullName>
    </alternativeName>
</protein>
<evidence type="ECO:0000255" key="1">
    <source>
        <dbReference type="HAMAP-Rule" id="MF_01325"/>
    </source>
</evidence>
<evidence type="ECO:0000256" key="2">
    <source>
        <dbReference type="SAM" id="MobiDB-lite"/>
    </source>
</evidence>
<evidence type="ECO:0000305" key="3"/>
<comment type="function">
    <text evidence="1">One of the primary rRNA binding proteins, it binds directly near the 3'-end of the 23S rRNA, where it nucleates assembly of the 50S subunit.</text>
</comment>
<comment type="subunit">
    <text evidence="1">Part of the 50S ribosomal subunit. Forms a cluster with proteins L14 and L19.</text>
</comment>
<comment type="similarity">
    <text evidence="1">Belongs to the universal ribosomal protein uL3 family.</text>
</comment>
<name>RL3_LEPBL</name>
<gene>
    <name evidence="1" type="primary">rplC1</name>
    <name type="ordered locus">LBL_0413</name>
</gene>
<gene>
    <name evidence="1" type="primary">rplC2</name>
    <name type="ordered locus">LBL_0453</name>
</gene>
<reference key="1">
    <citation type="journal article" date="2006" name="Proc. Natl. Acad. Sci. U.S.A.">
        <title>Genome reduction in Leptospira borgpetersenii reflects limited transmission potential.</title>
        <authorList>
            <person name="Bulach D.M."/>
            <person name="Zuerner R.L."/>
            <person name="Wilson P."/>
            <person name="Seemann T."/>
            <person name="McGrath A."/>
            <person name="Cullen P.A."/>
            <person name="Davis J."/>
            <person name="Johnson M."/>
            <person name="Kuczek E."/>
            <person name="Alt D.P."/>
            <person name="Peterson-Burch B."/>
            <person name="Coppel R.L."/>
            <person name="Rood J.I."/>
            <person name="Davies J.K."/>
            <person name="Adler B."/>
        </authorList>
    </citation>
    <scope>NUCLEOTIDE SEQUENCE [LARGE SCALE GENOMIC DNA]</scope>
    <source>
        <strain>L550</strain>
    </source>
</reference>
<proteinExistence type="inferred from homology"/>
<keyword id="KW-0687">Ribonucleoprotein</keyword>
<keyword id="KW-0689">Ribosomal protein</keyword>
<keyword id="KW-0694">RNA-binding</keyword>
<keyword id="KW-0699">rRNA-binding</keyword>
<dbReference type="EMBL" id="CP000348">
    <property type="protein sequence ID" value="ABJ78011.1"/>
    <property type="molecule type" value="Genomic_DNA"/>
</dbReference>
<dbReference type="EMBL" id="CP000348">
    <property type="protein sequence ID" value="ABJ78051.1"/>
    <property type="molecule type" value="Genomic_DNA"/>
</dbReference>
<dbReference type="SMR" id="Q055E4"/>
<dbReference type="KEGG" id="lbl:LBL_0413"/>
<dbReference type="KEGG" id="lbl:LBL_0453"/>
<dbReference type="HOGENOM" id="CLU_044142_4_1_12"/>
<dbReference type="GO" id="GO:0022625">
    <property type="term" value="C:cytosolic large ribosomal subunit"/>
    <property type="evidence" value="ECO:0007669"/>
    <property type="project" value="TreeGrafter"/>
</dbReference>
<dbReference type="GO" id="GO:0019843">
    <property type="term" value="F:rRNA binding"/>
    <property type="evidence" value="ECO:0007669"/>
    <property type="project" value="UniProtKB-UniRule"/>
</dbReference>
<dbReference type="GO" id="GO:0003735">
    <property type="term" value="F:structural constituent of ribosome"/>
    <property type="evidence" value="ECO:0007669"/>
    <property type="project" value="InterPro"/>
</dbReference>
<dbReference type="GO" id="GO:0006412">
    <property type="term" value="P:translation"/>
    <property type="evidence" value="ECO:0007669"/>
    <property type="project" value="UniProtKB-UniRule"/>
</dbReference>
<dbReference type="FunFam" id="2.40.30.10:FF:000004">
    <property type="entry name" value="50S ribosomal protein L3"/>
    <property type="match status" value="1"/>
</dbReference>
<dbReference type="Gene3D" id="3.30.160.810">
    <property type="match status" value="1"/>
</dbReference>
<dbReference type="Gene3D" id="2.40.30.10">
    <property type="entry name" value="Translation factors"/>
    <property type="match status" value="1"/>
</dbReference>
<dbReference type="HAMAP" id="MF_01325_B">
    <property type="entry name" value="Ribosomal_uL3_B"/>
    <property type="match status" value="1"/>
</dbReference>
<dbReference type="InterPro" id="IPR000597">
    <property type="entry name" value="Ribosomal_uL3"/>
</dbReference>
<dbReference type="InterPro" id="IPR019927">
    <property type="entry name" value="Ribosomal_uL3_bac/org-type"/>
</dbReference>
<dbReference type="InterPro" id="IPR009000">
    <property type="entry name" value="Transl_B-barrel_sf"/>
</dbReference>
<dbReference type="NCBIfam" id="TIGR03625">
    <property type="entry name" value="L3_bact"/>
    <property type="match status" value="1"/>
</dbReference>
<dbReference type="PANTHER" id="PTHR11229">
    <property type="entry name" value="50S RIBOSOMAL PROTEIN L3"/>
    <property type="match status" value="1"/>
</dbReference>
<dbReference type="PANTHER" id="PTHR11229:SF16">
    <property type="entry name" value="LARGE RIBOSOMAL SUBUNIT PROTEIN UL3C"/>
    <property type="match status" value="1"/>
</dbReference>
<dbReference type="Pfam" id="PF00297">
    <property type="entry name" value="Ribosomal_L3"/>
    <property type="match status" value="1"/>
</dbReference>
<dbReference type="SUPFAM" id="SSF50447">
    <property type="entry name" value="Translation proteins"/>
    <property type="match status" value="1"/>
</dbReference>
<feature type="chain" id="PRO_0000353610" description="Large ribosomal subunit protein uL3">
    <location>
        <begin position="1"/>
        <end position="206"/>
    </location>
</feature>
<feature type="region of interest" description="Disordered" evidence="2">
    <location>
        <begin position="122"/>
        <end position="154"/>
    </location>
</feature>